<feature type="chain" id="PRO_0000153912" description="Putative adenylate kinase">
    <location>
        <begin position="1"/>
        <end position="180"/>
    </location>
</feature>
<feature type="region of interest" description="NMP" evidence="1">
    <location>
        <begin position="30"/>
        <end position="50"/>
    </location>
</feature>
<feature type="region of interest" description="LID" evidence="1">
    <location>
        <begin position="99"/>
        <end position="109"/>
    </location>
</feature>
<feature type="binding site" evidence="1">
    <location>
        <position position="10"/>
    </location>
    <ligand>
        <name>ATP</name>
        <dbReference type="ChEBI" id="CHEBI:30616"/>
    </ligand>
</feature>
<feature type="binding site" evidence="1">
    <location>
        <position position="12"/>
    </location>
    <ligand>
        <name>ATP</name>
        <dbReference type="ChEBI" id="CHEBI:30616"/>
    </ligand>
</feature>
<feature type="binding site" evidence="1">
    <location>
        <position position="13"/>
    </location>
    <ligand>
        <name>ATP</name>
        <dbReference type="ChEBI" id="CHEBI:30616"/>
    </ligand>
</feature>
<feature type="binding site" evidence="1">
    <location>
        <position position="14"/>
    </location>
    <ligand>
        <name>ATP</name>
        <dbReference type="ChEBI" id="CHEBI:30616"/>
    </ligand>
</feature>
<feature type="binding site" evidence="1">
    <location>
        <position position="15"/>
    </location>
    <ligand>
        <name>ATP</name>
        <dbReference type="ChEBI" id="CHEBI:30616"/>
    </ligand>
</feature>
<feature type="binding site" evidence="1">
    <location>
        <position position="100"/>
    </location>
    <ligand>
        <name>ATP</name>
        <dbReference type="ChEBI" id="CHEBI:30616"/>
    </ligand>
</feature>
<feature type="binding site" evidence="1">
    <location>
        <position position="138"/>
    </location>
    <ligand>
        <name>ATP</name>
        <dbReference type="ChEBI" id="CHEBI:30616"/>
    </ligand>
</feature>
<proteinExistence type="inferred from homology"/>
<name>KAD6_PYRFU</name>
<comment type="function">
    <text evidence="1">Broad-specificity nucleoside monophosphate (NMP) kinase that catalyzes the reversible transfer of the terminal phosphate group between nucleoside triphosphates and monophosphates. Also has ATPase activity. Involved in the late maturation steps of the 30S ribosomal particles, specifically 16S rRNA maturation. While NMP activity is not required for ribosome maturation, ATPase activity is. Associates transiently with small ribosomal subunit protein uS11. ATP hydrolysis breaks the interaction with uS11. May temporarily remove uS11 from the ribosome to enable a conformational change of the ribosomal RNA that is needed for the final maturation step of the small ribosomal subunit.</text>
</comment>
<comment type="catalytic activity">
    <reaction evidence="1">
        <text>AMP + ATP = 2 ADP</text>
        <dbReference type="Rhea" id="RHEA:12973"/>
        <dbReference type="ChEBI" id="CHEBI:30616"/>
        <dbReference type="ChEBI" id="CHEBI:456215"/>
        <dbReference type="ChEBI" id="CHEBI:456216"/>
        <dbReference type="EC" id="2.7.4.3"/>
    </reaction>
</comment>
<comment type="catalytic activity">
    <reaction evidence="1">
        <text>ATP + H2O = ADP + phosphate + H(+)</text>
        <dbReference type="Rhea" id="RHEA:13065"/>
        <dbReference type="ChEBI" id="CHEBI:15377"/>
        <dbReference type="ChEBI" id="CHEBI:15378"/>
        <dbReference type="ChEBI" id="CHEBI:30616"/>
        <dbReference type="ChEBI" id="CHEBI:43474"/>
        <dbReference type="ChEBI" id="CHEBI:456216"/>
    </reaction>
</comment>
<comment type="subunit">
    <text evidence="1">Interacts with uS11. Not a structural component of 40S pre-ribosomes, but transiently interacts with them by binding to uS11.</text>
</comment>
<comment type="similarity">
    <text evidence="1">Belongs to the adenylate kinase family. AK6 subfamily.</text>
</comment>
<organism>
    <name type="scientific">Pyrococcus furiosus (strain ATCC 43587 / DSM 3638 / JCM 8422 / Vc1)</name>
    <dbReference type="NCBI Taxonomy" id="186497"/>
    <lineage>
        <taxon>Archaea</taxon>
        <taxon>Methanobacteriati</taxon>
        <taxon>Methanobacteriota</taxon>
        <taxon>Thermococci</taxon>
        <taxon>Thermococcales</taxon>
        <taxon>Thermococcaceae</taxon>
        <taxon>Pyrococcus</taxon>
    </lineage>
</organism>
<accession>Q8U1S1</accession>
<protein>
    <recommendedName>
        <fullName evidence="1">Putative adenylate kinase</fullName>
        <shortName evidence="1">AK</shortName>
        <ecNumber evidence="1">2.7.4.3</ecNumber>
    </recommendedName>
    <alternativeName>
        <fullName evidence="1">ATP-AMP transphosphorylase</fullName>
    </alternativeName>
</protein>
<evidence type="ECO:0000255" key="1">
    <source>
        <dbReference type="HAMAP-Rule" id="MF_00039"/>
    </source>
</evidence>
<keyword id="KW-0067">ATP-binding</keyword>
<keyword id="KW-0418">Kinase</keyword>
<keyword id="KW-0547">Nucleotide-binding</keyword>
<keyword id="KW-1185">Reference proteome</keyword>
<keyword id="KW-0690">Ribosome biogenesis</keyword>
<keyword id="KW-0698">rRNA processing</keyword>
<keyword id="KW-0808">Transferase</keyword>
<dbReference type="EC" id="2.7.4.3" evidence="1"/>
<dbReference type="EMBL" id="AE009950">
    <property type="protein sequence ID" value="AAL81258.1"/>
    <property type="molecule type" value="Genomic_DNA"/>
</dbReference>
<dbReference type="RefSeq" id="WP_011012274.1">
    <property type="nucleotide sequence ID" value="NZ_CP023154.1"/>
</dbReference>
<dbReference type="SMR" id="Q8U1S1"/>
<dbReference type="STRING" id="186497.PF1134"/>
<dbReference type="PaxDb" id="186497-PF1134"/>
<dbReference type="KEGG" id="pfu:PF1134"/>
<dbReference type="PATRIC" id="fig|186497.12.peg.1195"/>
<dbReference type="eggNOG" id="arCOG01038">
    <property type="taxonomic scope" value="Archaea"/>
</dbReference>
<dbReference type="HOGENOM" id="CLU_079096_0_1_2"/>
<dbReference type="OrthoDB" id="8730at2157"/>
<dbReference type="PhylomeDB" id="Q8U1S1"/>
<dbReference type="Proteomes" id="UP000001013">
    <property type="component" value="Chromosome"/>
</dbReference>
<dbReference type="GO" id="GO:0004017">
    <property type="term" value="F:adenylate kinase activity"/>
    <property type="evidence" value="ECO:0007669"/>
    <property type="project" value="UniProtKB-UniRule"/>
</dbReference>
<dbReference type="GO" id="GO:0005524">
    <property type="term" value="F:ATP binding"/>
    <property type="evidence" value="ECO:0007669"/>
    <property type="project" value="UniProtKB-UniRule"/>
</dbReference>
<dbReference type="GO" id="GO:0016887">
    <property type="term" value="F:ATP hydrolysis activity"/>
    <property type="evidence" value="ECO:0007669"/>
    <property type="project" value="InterPro"/>
</dbReference>
<dbReference type="GO" id="GO:0042274">
    <property type="term" value="P:ribosomal small subunit biogenesis"/>
    <property type="evidence" value="ECO:0007669"/>
    <property type="project" value="UniProtKB-UniRule"/>
</dbReference>
<dbReference type="GO" id="GO:0006364">
    <property type="term" value="P:rRNA processing"/>
    <property type="evidence" value="ECO:0007669"/>
    <property type="project" value="UniProtKB-KW"/>
</dbReference>
<dbReference type="Gene3D" id="3.40.50.300">
    <property type="entry name" value="P-loop containing nucleotide triphosphate hydrolases"/>
    <property type="match status" value="1"/>
</dbReference>
<dbReference type="HAMAP" id="MF_00039">
    <property type="entry name" value="Adenylate_kinase_AK6"/>
    <property type="match status" value="1"/>
</dbReference>
<dbReference type="InterPro" id="IPR020618">
    <property type="entry name" value="Adenyl_kinase_AK6"/>
</dbReference>
<dbReference type="InterPro" id="IPR027417">
    <property type="entry name" value="P-loop_NTPase"/>
</dbReference>
<dbReference type="NCBIfam" id="NF003012">
    <property type="entry name" value="PRK03839.1"/>
    <property type="match status" value="1"/>
</dbReference>
<dbReference type="PANTHER" id="PTHR12595:SF0">
    <property type="entry name" value="ADENYLATE KINASE ISOENZYME 6"/>
    <property type="match status" value="1"/>
</dbReference>
<dbReference type="PANTHER" id="PTHR12595">
    <property type="entry name" value="POS9-ACTIVATING FACTOR FAP7-RELATED"/>
    <property type="match status" value="1"/>
</dbReference>
<dbReference type="Pfam" id="PF13238">
    <property type="entry name" value="AAA_18"/>
    <property type="match status" value="1"/>
</dbReference>
<dbReference type="SUPFAM" id="SSF52540">
    <property type="entry name" value="P-loop containing nucleoside triphosphate hydrolases"/>
    <property type="match status" value="1"/>
</dbReference>
<reference key="1">
    <citation type="journal article" date="1999" name="Genetics">
        <title>Divergence of the hyperthermophilic archaea Pyrococcus furiosus and P. horikoshii inferred from complete genomic sequences.</title>
        <authorList>
            <person name="Maeder D.L."/>
            <person name="Weiss R.B."/>
            <person name="Dunn D.M."/>
            <person name="Cherry J.L."/>
            <person name="Gonzalez J.M."/>
            <person name="DiRuggiero J."/>
            <person name="Robb F.T."/>
        </authorList>
    </citation>
    <scope>NUCLEOTIDE SEQUENCE [LARGE SCALE GENOMIC DNA]</scope>
    <source>
        <strain>ATCC 43587 / DSM 3638 / JCM 8422 / Vc1</strain>
    </source>
</reference>
<gene>
    <name type="ordered locus">PF1134</name>
</gene>
<sequence length="180" mass="20033">MIIAITGTPGVGKTTVARKLAEKLGCKYVNLRDFALEKGIGEVKGDELEVEVDELAYFVEKEFKGKNVVLDGHLSHLMPADLVIVLRAHPKTIAERLKERGYSKDKIGENVEAELVDVILIEALDEHENVIEVDTTGKTPEEVVNEILNLINSGIKRRVGIVDWTKVYEEIIPYLRLGGD</sequence>